<accession>B4RQP8</accession>
<protein>
    <recommendedName>
        <fullName evidence="1">UPF0102 protein NGK_2254</fullName>
    </recommendedName>
</protein>
<proteinExistence type="inferred from homology"/>
<feature type="chain" id="PRO_1000091251" description="UPF0102 protein NGK_2254">
    <location>
        <begin position="1"/>
        <end position="115"/>
    </location>
</feature>
<sequence length="115" mass="12980">MRLNHKQGTAGEDAALAFLQSQGCTLLARNWHCAYGEIDLIVKNGGMILFVEVKYRKNQRFGGAAYSISPSKLLKLQRSVEYYLQQNRLTNVPCRLDAVLIEGNRPPEWIKNITG</sequence>
<reference key="1">
    <citation type="journal article" date="2008" name="J. Bacteriol.">
        <title>Complete genome sequence of Neisseria gonorrhoeae NCCP11945.</title>
        <authorList>
            <person name="Chung G.T."/>
            <person name="Yoo J.S."/>
            <person name="Oh H.B."/>
            <person name="Lee Y.S."/>
            <person name="Cha S.H."/>
            <person name="Kim S.J."/>
            <person name="Yoo C.K."/>
        </authorList>
    </citation>
    <scope>NUCLEOTIDE SEQUENCE [LARGE SCALE GENOMIC DNA]</scope>
    <source>
        <strain>NCCP11945</strain>
    </source>
</reference>
<organism>
    <name type="scientific">Neisseria gonorrhoeae (strain NCCP11945)</name>
    <dbReference type="NCBI Taxonomy" id="521006"/>
    <lineage>
        <taxon>Bacteria</taxon>
        <taxon>Pseudomonadati</taxon>
        <taxon>Pseudomonadota</taxon>
        <taxon>Betaproteobacteria</taxon>
        <taxon>Neisseriales</taxon>
        <taxon>Neisseriaceae</taxon>
        <taxon>Neisseria</taxon>
    </lineage>
</organism>
<gene>
    <name type="ordered locus">NGK_2254</name>
</gene>
<comment type="similarity">
    <text evidence="1">Belongs to the UPF0102 family.</text>
</comment>
<evidence type="ECO:0000255" key="1">
    <source>
        <dbReference type="HAMAP-Rule" id="MF_00048"/>
    </source>
</evidence>
<dbReference type="EMBL" id="CP001050">
    <property type="protein sequence ID" value="ACF30858.1"/>
    <property type="molecule type" value="Genomic_DNA"/>
</dbReference>
<dbReference type="RefSeq" id="WP_003686873.1">
    <property type="nucleotide sequence ID" value="NC_011035.1"/>
</dbReference>
<dbReference type="SMR" id="B4RQP8"/>
<dbReference type="KEGG" id="ngk:NGK_2254"/>
<dbReference type="HOGENOM" id="CLU_115353_1_1_4"/>
<dbReference type="Proteomes" id="UP000002564">
    <property type="component" value="Chromosome"/>
</dbReference>
<dbReference type="GO" id="GO:0003676">
    <property type="term" value="F:nucleic acid binding"/>
    <property type="evidence" value="ECO:0007669"/>
    <property type="project" value="InterPro"/>
</dbReference>
<dbReference type="Gene3D" id="3.40.1350.10">
    <property type="match status" value="1"/>
</dbReference>
<dbReference type="HAMAP" id="MF_00048">
    <property type="entry name" value="UPF0102"/>
    <property type="match status" value="1"/>
</dbReference>
<dbReference type="InterPro" id="IPR011335">
    <property type="entry name" value="Restrct_endonuc-II-like"/>
</dbReference>
<dbReference type="InterPro" id="IPR011856">
    <property type="entry name" value="tRNA_endonuc-like_dom_sf"/>
</dbReference>
<dbReference type="InterPro" id="IPR003509">
    <property type="entry name" value="UPF0102_YraN-like"/>
</dbReference>
<dbReference type="NCBIfam" id="NF009150">
    <property type="entry name" value="PRK12497.1-3"/>
    <property type="match status" value="1"/>
</dbReference>
<dbReference type="NCBIfam" id="TIGR00252">
    <property type="entry name" value="YraN family protein"/>
    <property type="match status" value="1"/>
</dbReference>
<dbReference type="PANTHER" id="PTHR34039">
    <property type="entry name" value="UPF0102 PROTEIN YRAN"/>
    <property type="match status" value="1"/>
</dbReference>
<dbReference type="PANTHER" id="PTHR34039:SF1">
    <property type="entry name" value="UPF0102 PROTEIN YRAN"/>
    <property type="match status" value="1"/>
</dbReference>
<dbReference type="Pfam" id="PF02021">
    <property type="entry name" value="UPF0102"/>
    <property type="match status" value="1"/>
</dbReference>
<dbReference type="SUPFAM" id="SSF52980">
    <property type="entry name" value="Restriction endonuclease-like"/>
    <property type="match status" value="1"/>
</dbReference>
<name>Y2254_NEIG2</name>